<protein>
    <recommendedName>
        <fullName>Fatty acid-binding protein 1, liver</fullName>
    </recommendedName>
    <alternativeName>
        <fullName>Liver-type fatty acid-binding protein</fullName>
        <shortName>L-FABP</shortName>
    </alternativeName>
</protein>
<dbReference type="SMR" id="P81399"/>
<dbReference type="GO" id="GO:0005737">
    <property type="term" value="C:cytoplasm"/>
    <property type="evidence" value="ECO:0007669"/>
    <property type="project" value="UniProtKB-SubCell"/>
</dbReference>
<dbReference type="GO" id="GO:0008289">
    <property type="term" value="F:lipid binding"/>
    <property type="evidence" value="ECO:0007669"/>
    <property type="project" value="UniProtKB-KW"/>
</dbReference>
<dbReference type="CDD" id="cd19444">
    <property type="entry name" value="FABP1"/>
    <property type="match status" value="1"/>
</dbReference>
<dbReference type="FunFam" id="2.40.128.20:FF:000006">
    <property type="entry name" value="Fatty acid-binding protein, liver"/>
    <property type="match status" value="1"/>
</dbReference>
<dbReference type="Gene3D" id="2.40.128.20">
    <property type="match status" value="1"/>
</dbReference>
<dbReference type="InterPro" id="IPR012674">
    <property type="entry name" value="Calycin"/>
</dbReference>
<dbReference type="InterPro" id="IPR000463">
    <property type="entry name" value="Fatty_acid-bd"/>
</dbReference>
<dbReference type="InterPro" id="IPR031259">
    <property type="entry name" value="ILBP"/>
</dbReference>
<dbReference type="PANTHER" id="PTHR11955">
    <property type="entry name" value="FATTY ACID BINDING PROTEIN"/>
    <property type="match status" value="1"/>
</dbReference>
<dbReference type="Pfam" id="PF14651">
    <property type="entry name" value="Lipocalin_7"/>
    <property type="match status" value="1"/>
</dbReference>
<dbReference type="PRINTS" id="PR00178">
    <property type="entry name" value="FATTYACIDBP"/>
</dbReference>
<dbReference type="SUPFAM" id="SSF50814">
    <property type="entry name" value="Lipocalins"/>
    <property type="match status" value="1"/>
</dbReference>
<dbReference type="PROSITE" id="PS00214">
    <property type="entry name" value="FABP"/>
    <property type="match status" value="1"/>
</dbReference>
<proteinExistence type="evidence at protein level"/>
<sequence length="126" mass="13915">SFAGKYELQSQENFEAFMKAIGLPDELIQKGKDIKSVSEIQQNGKSFKVTVTTGSKVLENEFTLGEEAELETLTGEKVKSIVKQEGDNKLVVNLKGITSVTELSGDTLINTLQKGDDTYKRISKRI</sequence>
<reference key="1">
    <citation type="journal article" date="1999" name="Eur. J. Biochem.">
        <title>Isolation, amino acid sequence determination and binding properties of two fatty-acid-binding proteins from axolotl (Ambistoma mexicanum) liver. Evolutionary relationship.</title>
        <authorList>
            <person name="Di Pietro S.M."/>
            <person name="Veerkamp J.H."/>
            <person name="Santome J.A."/>
        </authorList>
    </citation>
    <scope>PROTEIN SEQUENCE</scope>
    <source>
        <tissue>Liver</tissue>
    </source>
</reference>
<keyword id="KW-0963">Cytoplasm</keyword>
<keyword id="KW-0903">Direct protein sequencing</keyword>
<keyword id="KW-0446">Lipid-binding</keyword>
<keyword id="KW-0813">Transport</keyword>
<feature type="chain" id="PRO_0000067343" description="Fatty acid-binding protein 1, liver">
    <location>
        <begin position="1"/>
        <end position="126"/>
    </location>
</feature>
<evidence type="ECO:0000250" key="1"/>
<evidence type="ECO:0000305" key="2"/>
<comment type="function">
    <text evidence="1">Binds free fatty acids and their coenzyme A derivatives, bilirubin, and some other small molecules in the cytoplasm. May be involved in intracellular lipid transport (By similarity). The specificity of axolotl L-FABP differs from that of LB-FABP.</text>
</comment>
<comment type="subcellular location">
    <subcellularLocation>
        <location>Cytoplasm</location>
    </subcellularLocation>
</comment>
<comment type="domain">
    <text evidence="1">Forms a beta-barrel structure that accommodates hydrophobic ligands in its interior.</text>
</comment>
<comment type="similarity">
    <text evidence="2">Belongs to the calycin superfamily. Fatty-acid binding protein (FABP) family.</text>
</comment>
<name>FABP1_AMBME</name>
<accession>P81399</accession>
<organism>
    <name type="scientific">Ambystoma mexicanum</name>
    <name type="common">Axolotl</name>
    <dbReference type="NCBI Taxonomy" id="8296"/>
    <lineage>
        <taxon>Eukaryota</taxon>
        <taxon>Metazoa</taxon>
        <taxon>Chordata</taxon>
        <taxon>Craniata</taxon>
        <taxon>Vertebrata</taxon>
        <taxon>Euteleostomi</taxon>
        <taxon>Amphibia</taxon>
        <taxon>Batrachia</taxon>
        <taxon>Caudata</taxon>
        <taxon>Salamandroidea</taxon>
        <taxon>Ambystomatidae</taxon>
        <taxon>Ambystoma</taxon>
    </lineage>
</organism>